<organism>
    <name type="scientific">Macaca mulatta</name>
    <name type="common">Rhesus macaque</name>
    <dbReference type="NCBI Taxonomy" id="9544"/>
    <lineage>
        <taxon>Eukaryota</taxon>
        <taxon>Metazoa</taxon>
        <taxon>Chordata</taxon>
        <taxon>Craniata</taxon>
        <taxon>Vertebrata</taxon>
        <taxon>Euteleostomi</taxon>
        <taxon>Mammalia</taxon>
        <taxon>Eutheria</taxon>
        <taxon>Euarchontoglires</taxon>
        <taxon>Primates</taxon>
        <taxon>Haplorrhini</taxon>
        <taxon>Catarrhini</taxon>
        <taxon>Cercopithecidae</taxon>
        <taxon>Cercopithecinae</taxon>
        <taxon>Macaca</taxon>
    </lineage>
</organism>
<name>TOPZ1_MACMU</name>
<evidence type="ECO:0000250" key="1">
    <source>
        <dbReference type="UniProtKB" id="E5FYH1"/>
    </source>
</evidence>
<evidence type="ECO:0000256" key="2">
    <source>
        <dbReference type="SAM" id="MobiDB-lite"/>
    </source>
</evidence>
<keyword id="KW-0963">Cytoplasm</keyword>
<keyword id="KW-0221">Differentiation</keyword>
<keyword id="KW-1185">Reference proteome</keyword>
<keyword id="KW-0744">Spermatogenesis</keyword>
<protein>
    <recommendedName>
        <fullName evidence="1">Protein TOPAZ1</fullName>
    </recommendedName>
    <alternativeName>
        <fullName evidence="1">Testis- and ovary-specific PAZ domain-containing protein 1</fullName>
    </alternativeName>
</protein>
<gene>
    <name type="primary">TOPAZ1</name>
</gene>
<proteinExistence type="inferred from homology"/>
<accession>F6ULY3</accession>
<feature type="chain" id="PRO_0000416060" description="Protein TOPAZ1">
    <location>
        <begin position="1"/>
        <end position="1687"/>
    </location>
</feature>
<feature type="region of interest" description="Disordered" evidence="2">
    <location>
        <begin position="1"/>
        <end position="132"/>
    </location>
</feature>
<feature type="region of interest" description="Disordered" evidence="2">
    <location>
        <begin position="596"/>
        <end position="632"/>
    </location>
</feature>
<feature type="region of interest" description="Disordered" evidence="2">
    <location>
        <begin position="938"/>
        <end position="969"/>
    </location>
</feature>
<feature type="compositionally biased region" description="Gly residues" evidence="2">
    <location>
        <begin position="31"/>
        <end position="41"/>
    </location>
</feature>
<feature type="compositionally biased region" description="Basic and acidic residues" evidence="2">
    <location>
        <begin position="80"/>
        <end position="113"/>
    </location>
</feature>
<feature type="compositionally biased region" description="Polar residues" evidence="2">
    <location>
        <begin position="598"/>
        <end position="622"/>
    </location>
</feature>
<feature type="compositionally biased region" description="Polar residues" evidence="2">
    <location>
        <begin position="948"/>
        <end position="963"/>
    </location>
</feature>
<dbReference type="FunCoup" id="F6ULY3">
    <property type="interactions" value="46"/>
</dbReference>
<dbReference type="STRING" id="9544.ENSMMUP00000019824"/>
<dbReference type="PaxDb" id="9544-ENSMMUP00000019824"/>
<dbReference type="eggNOG" id="ENOG502QPIV">
    <property type="taxonomic scope" value="Eukaryota"/>
</dbReference>
<dbReference type="HOGENOM" id="CLU_003190_0_0_1"/>
<dbReference type="InParanoid" id="F6ULY3"/>
<dbReference type="TreeFam" id="TF338635"/>
<dbReference type="Proteomes" id="UP000006718">
    <property type="component" value="Unassembled WGS sequence"/>
</dbReference>
<dbReference type="GO" id="GO:0005829">
    <property type="term" value="C:cytosol"/>
    <property type="evidence" value="ECO:0007669"/>
    <property type="project" value="UniProtKB-SubCell"/>
</dbReference>
<dbReference type="GO" id="GO:0030154">
    <property type="term" value="P:cell differentiation"/>
    <property type="evidence" value="ECO:0007669"/>
    <property type="project" value="UniProtKB-KW"/>
</dbReference>
<dbReference type="GO" id="GO:0048137">
    <property type="term" value="P:spermatocyte division"/>
    <property type="evidence" value="ECO:0000318"/>
    <property type="project" value="GO_Central"/>
</dbReference>
<dbReference type="InterPro" id="IPR038952">
    <property type="entry name" value="TOPAZ1"/>
</dbReference>
<dbReference type="InterPro" id="IPR029435">
    <property type="entry name" value="TOPAZ1_dom"/>
</dbReference>
<dbReference type="PANTHER" id="PTHR35671">
    <property type="entry name" value="PROTEIN TOPAZ1"/>
    <property type="match status" value="1"/>
</dbReference>
<dbReference type="PANTHER" id="PTHR35671:SF1">
    <property type="entry name" value="PROTEIN TOPAZ1"/>
    <property type="match status" value="1"/>
</dbReference>
<dbReference type="Pfam" id="PF14669">
    <property type="entry name" value="Asp_Glu_race_2"/>
    <property type="match status" value="1"/>
</dbReference>
<sequence>MRRPPPLGPTTASGPEGNVRNLRKRQAPGPGAAGGCGPEAGGRGENRQKRRMVARATPGRGEVKSDKSVAASGAGKAARRRVEGRRGQVSPSDRRGLEAAKEAEFPLQTERHTKEKRKVTEASTDDPQPGFDLVRKESLTSSESFQTVECLRSLGKEGIVEGIKRRIRNKKLKSLENPPLKITENEATQNIKVEFQDELYKNTLKYSCNILSPEVENNFVFKLRDCNCFPHSKDCNDENNLPYEPDGGCMHVAENFSKKENFRSLAEKSDTNNIPQLLQTEENVMGVNKLLPEESDLYQSKINGLLPCLQREKNKYSIEESSVGRKPRKRMKLSEKADETVTQMNFSNEYNKSELMLQENQMIADGKEAEAKSPLNVLRKVSHNTVSLMDHLLSVPEMVEKETSSEHHVNAVFQKTIEPLLKEETENASEPLGYENMALKEDFKSKSCIGKSPEYHIERRSSREDLRSDSEELKLSCQRTIPMTGKRTWPYYSCARISAWCWKKASLPESSYFLPGSQKSCKKVDVPKHQTNKTHLTDSKLLLQSSLTETNTESSSKEKLDSNLNCLFSVSAVEHTLMVIKEPIIKDDKKIKSEELSRSGSEVISNTTEDTQLTSDTQSLTGNKKRDRGNLTKLNLTAASKDGQEANNSTGKTIHRKACVAKQTFVVPDLVKILNTGRLTNFKIPLLKNKTKKRKEVNAKSSEREAYSPLELLDNLSGADTRQNRSKENVSMTMLGPQTLSIQNSVTPVQASSDSFYNKNSCSISPSFTKHGNSSKPSNHFSEPGNIVSNKEVASLTVENNAFSSDPGYVEKSPSFCCNKQETFRPVSSEVRGRKITKNFSEVGFPDILKAYEDDVLLIDVIQDDPDLFGVSNEGELSFTSEVPRISQEPNVPGEHQLTDSKYVETPVKKEPSDDLRELPVLDCGPIKPDICASNSAASEIRHDPKDANTSLGEVANETSENETLGDFSEQIKGSDLDEKHRFTDKVITKEEKENIYEVRKSKDSRNADIMVGECQFAAPVPKPLCLLVPPLNLSGHQEDTILNTWMNDFRFLGKHSVLKLQNPETCEIFKREKNVGVFQKSLGLMIPYKYCKFHFNTLRGCERPLCKFAHVPEQGDEKVCMDVFKKYININELCLLQRAVNVFMEYYRKFPPGIYFDLQVLNDLLNSLLKHCLLKEVFQIVNLSIMVKMLPSLKILLNIFEHVATMKLRNAVPALIDIFCKLVEAGMVLDPEHFNYIVKLLYQVQASKQEITAVLEMKSRLQMRQFKKNWKCDLDSALNKLEHCKEKGDWTKLGKLYINVKMGCEKFADFQTFCACIAETLTKNCEDERPDTPFCEFAETVSKDPQNSKVDKGVLGRIGISAMYFYHKLLQWSKGRKVLDKLYELKIHFASLKGLIGPEKLASRCQIVNVAAEIFLKSGSLDGALWVMRESEWIIDTPLWPCDRLDVLNRHNLLCTIAHETLAKSLYRQTFEVLQNLPGFQNSQETVEVSQYSLLFNKLLGSCIESNSLGMSSSVAEFMISKSIPIDFSFLRRLITSLGRSRLWLKARAHYKSALSLGCYPPLEGNLYRKLLLIPSYLSEIEMLLAIEIFMVSNASSIQSPGTSTQILQIVLKRCEDNQSRSNDDYQAAVERLIMAARISDPKLFVKHMTVNVNKEQVYSLEHCSALKWLKENMKWAGKVWLFSNH</sequence>
<comment type="function">
    <text evidence="1">Important for normal spermatogenesis and male fertility. Specifically required for progression to the post-meiotic stages of spermatocyte development. Seems to be necessary for normal expression levels of a number of testis-expressed gene transcripts, although its role in this process is unclear.</text>
</comment>
<comment type="subcellular location">
    <subcellularLocation>
        <location evidence="1">Cytoplasm</location>
        <location evidence="1">Cytosol</location>
    </subcellularLocation>
</comment>
<reference key="1">
    <citation type="journal article" date="2007" name="Science">
        <title>Evolutionary and biomedical insights from the rhesus macaque genome.</title>
        <authorList>
            <person name="Gibbs R.A."/>
            <person name="Rogers J."/>
            <person name="Katze M.G."/>
            <person name="Bumgarner R."/>
            <person name="Weinstock G.M."/>
            <person name="Mardis E.R."/>
            <person name="Remington K.A."/>
            <person name="Strausberg R.L."/>
            <person name="Venter J.C."/>
            <person name="Wilson R.K."/>
            <person name="Batzer M.A."/>
            <person name="Bustamante C.D."/>
            <person name="Eichler E.E."/>
            <person name="Hahn M.W."/>
            <person name="Hardison R.C."/>
            <person name="Makova K.D."/>
            <person name="Miller W."/>
            <person name="Milosavljevic A."/>
            <person name="Palermo R.E."/>
            <person name="Siepel A."/>
            <person name="Sikela J.M."/>
            <person name="Attaway T."/>
            <person name="Bell S."/>
            <person name="Bernard K.E."/>
            <person name="Buhay C.J."/>
            <person name="Chandrabose M.N."/>
            <person name="Dao M."/>
            <person name="Davis C."/>
            <person name="Delehaunty K.D."/>
            <person name="Ding Y."/>
            <person name="Dinh H.H."/>
            <person name="Dugan-Rocha S."/>
            <person name="Fulton L.A."/>
            <person name="Gabisi R.A."/>
            <person name="Garner T.T."/>
            <person name="Godfrey J."/>
            <person name="Hawes A.C."/>
            <person name="Hernandez J."/>
            <person name="Hines S."/>
            <person name="Holder M."/>
            <person name="Hume J."/>
            <person name="Jhangiani S.N."/>
            <person name="Joshi V."/>
            <person name="Khan Z.M."/>
            <person name="Kirkness E.F."/>
            <person name="Cree A."/>
            <person name="Fowler R.G."/>
            <person name="Lee S."/>
            <person name="Lewis L.R."/>
            <person name="Li Z."/>
            <person name="Liu Y.-S."/>
            <person name="Moore S.M."/>
            <person name="Muzny D."/>
            <person name="Nazareth L.V."/>
            <person name="Ngo D.N."/>
            <person name="Okwuonu G.O."/>
            <person name="Pai G."/>
            <person name="Parker D."/>
            <person name="Paul H.A."/>
            <person name="Pfannkoch C."/>
            <person name="Pohl C.S."/>
            <person name="Rogers Y.-H.C."/>
            <person name="Ruiz S.J."/>
            <person name="Sabo A."/>
            <person name="Santibanez J."/>
            <person name="Schneider B.W."/>
            <person name="Smith S.M."/>
            <person name="Sodergren E."/>
            <person name="Svatek A.F."/>
            <person name="Utterback T.R."/>
            <person name="Vattathil S."/>
            <person name="Warren W."/>
            <person name="White C.S."/>
            <person name="Chinwalla A.T."/>
            <person name="Feng Y."/>
            <person name="Halpern A.L."/>
            <person name="Hillier L.W."/>
            <person name="Huang X."/>
            <person name="Minx P."/>
            <person name="Nelson J.O."/>
            <person name="Pepin K.H."/>
            <person name="Qin X."/>
            <person name="Sutton G.G."/>
            <person name="Venter E."/>
            <person name="Walenz B.P."/>
            <person name="Wallis J.W."/>
            <person name="Worley K.C."/>
            <person name="Yang S.-P."/>
            <person name="Jones S.M."/>
            <person name="Marra M.A."/>
            <person name="Rocchi M."/>
            <person name="Schein J.E."/>
            <person name="Baertsch R."/>
            <person name="Clarke L."/>
            <person name="Csuros M."/>
            <person name="Glasscock J."/>
            <person name="Harris R.A."/>
            <person name="Havlak P."/>
            <person name="Jackson A.R."/>
            <person name="Jiang H."/>
            <person name="Liu Y."/>
            <person name="Messina D.N."/>
            <person name="Shen Y."/>
            <person name="Song H.X.-Z."/>
            <person name="Wylie T."/>
            <person name="Zhang L."/>
            <person name="Birney E."/>
            <person name="Han K."/>
            <person name="Konkel M.K."/>
            <person name="Lee J."/>
            <person name="Smit A.F.A."/>
            <person name="Ullmer B."/>
            <person name="Wang H."/>
            <person name="Xing J."/>
            <person name="Burhans R."/>
            <person name="Cheng Z."/>
            <person name="Karro J.E."/>
            <person name="Ma J."/>
            <person name="Raney B."/>
            <person name="She X."/>
            <person name="Cox M.J."/>
            <person name="Demuth J.P."/>
            <person name="Dumas L.J."/>
            <person name="Han S.-G."/>
            <person name="Hopkins J."/>
            <person name="Karimpour-Fard A."/>
            <person name="Kim Y.H."/>
            <person name="Pollack J.R."/>
            <person name="Vinar T."/>
            <person name="Addo-Quaye C."/>
            <person name="Degenhardt J."/>
            <person name="Denby A."/>
            <person name="Hubisz M.J."/>
            <person name="Indap A."/>
            <person name="Kosiol C."/>
            <person name="Lahn B.T."/>
            <person name="Lawson H.A."/>
            <person name="Marklein A."/>
            <person name="Nielsen R."/>
            <person name="Vallender E.J."/>
            <person name="Clark A.G."/>
            <person name="Ferguson B."/>
            <person name="Hernandez R.D."/>
            <person name="Hirani K."/>
            <person name="Kehrer-Sawatzki H."/>
            <person name="Kolb J."/>
            <person name="Patil S."/>
            <person name="Pu L.-L."/>
            <person name="Ren Y."/>
            <person name="Smith D.G."/>
            <person name="Wheeler D.A."/>
            <person name="Schenck I."/>
            <person name="Ball E.V."/>
            <person name="Chen R."/>
            <person name="Cooper D.N."/>
            <person name="Giardine B."/>
            <person name="Hsu F."/>
            <person name="Kent W.J."/>
            <person name="Lesk A."/>
            <person name="Nelson D.L."/>
            <person name="O'brien W.E."/>
            <person name="Pruefer K."/>
            <person name="Stenson P.D."/>
            <person name="Wallace J.C."/>
            <person name="Ke H."/>
            <person name="Liu X.-M."/>
            <person name="Wang P."/>
            <person name="Xiang A.P."/>
            <person name="Yang F."/>
            <person name="Barber G.P."/>
            <person name="Haussler D."/>
            <person name="Karolchik D."/>
            <person name="Kern A.D."/>
            <person name="Kuhn R.M."/>
            <person name="Smith K.E."/>
            <person name="Zwieg A.S."/>
        </authorList>
    </citation>
    <scope>NUCLEOTIDE SEQUENCE [LARGE SCALE GENOMIC DNA]</scope>
</reference>